<keyword id="KW-0963">Cytoplasm</keyword>
<keyword id="KW-0413">Isomerase</keyword>
<keyword id="KW-0627">Porphyrin biosynthesis</keyword>
<keyword id="KW-0663">Pyridoxal phosphate</keyword>
<reference key="1">
    <citation type="submission" date="2006-06" db="EMBL/GenBank/DDBJ databases">
        <title>Complete sequence of Pseudoalteromonas atlantica T6c.</title>
        <authorList>
            <consortium name="US DOE Joint Genome Institute"/>
            <person name="Copeland A."/>
            <person name="Lucas S."/>
            <person name="Lapidus A."/>
            <person name="Barry K."/>
            <person name="Detter J.C."/>
            <person name="Glavina del Rio T."/>
            <person name="Hammon N."/>
            <person name="Israni S."/>
            <person name="Dalin E."/>
            <person name="Tice H."/>
            <person name="Pitluck S."/>
            <person name="Saunders E."/>
            <person name="Brettin T."/>
            <person name="Bruce D."/>
            <person name="Han C."/>
            <person name="Tapia R."/>
            <person name="Gilna P."/>
            <person name="Schmutz J."/>
            <person name="Larimer F."/>
            <person name="Land M."/>
            <person name="Hauser L."/>
            <person name="Kyrpides N."/>
            <person name="Kim E."/>
            <person name="Karls A.C."/>
            <person name="Bartlett D."/>
            <person name="Higgins B.P."/>
            <person name="Richardson P."/>
        </authorList>
    </citation>
    <scope>NUCLEOTIDE SEQUENCE [LARGE SCALE GENOMIC DNA]</scope>
    <source>
        <strain>T6c / ATCC BAA-1087</strain>
    </source>
</reference>
<organism>
    <name type="scientific">Pseudoalteromonas atlantica (strain T6c / ATCC BAA-1087)</name>
    <dbReference type="NCBI Taxonomy" id="3042615"/>
    <lineage>
        <taxon>Bacteria</taxon>
        <taxon>Pseudomonadati</taxon>
        <taxon>Pseudomonadota</taxon>
        <taxon>Gammaproteobacteria</taxon>
        <taxon>Alteromonadales</taxon>
        <taxon>Alteromonadaceae</taxon>
        <taxon>Paraglaciecola</taxon>
    </lineage>
</organism>
<proteinExistence type="inferred from homology"/>
<accession>Q15YL3</accession>
<evidence type="ECO:0000255" key="1">
    <source>
        <dbReference type="HAMAP-Rule" id="MF_00375"/>
    </source>
</evidence>
<feature type="chain" id="PRO_0000300935" description="Glutamate-1-semialdehyde 2,1-aminomutase">
    <location>
        <begin position="1"/>
        <end position="431"/>
    </location>
</feature>
<feature type="modified residue" description="N6-(pyridoxal phosphate)lysine" evidence="1">
    <location>
        <position position="265"/>
    </location>
</feature>
<comment type="catalytic activity">
    <reaction evidence="1">
        <text>(S)-4-amino-5-oxopentanoate = 5-aminolevulinate</text>
        <dbReference type="Rhea" id="RHEA:14265"/>
        <dbReference type="ChEBI" id="CHEBI:57501"/>
        <dbReference type="ChEBI" id="CHEBI:356416"/>
        <dbReference type="EC" id="5.4.3.8"/>
    </reaction>
</comment>
<comment type="cofactor">
    <cofactor evidence="1">
        <name>pyridoxal 5'-phosphate</name>
        <dbReference type="ChEBI" id="CHEBI:597326"/>
    </cofactor>
</comment>
<comment type="pathway">
    <text evidence="1">Porphyrin-containing compound metabolism; protoporphyrin-IX biosynthesis; 5-aminolevulinate from L-glutamyl-tRNA(Glu): step 2/2.</text>
</comment>
<comment type="subunit">
    <text evidence="1">Homodimer.</text>
</comment>
<comment type="subcellular location">
    <subcellularLocation>
        <location evidence="1">Cytoplasm</location>
    </subcellularLocation>
</comment>
<comment type="similarity">
    <text evidence="1">Belongs to the class-III pyridoxal-phosphate-dependent aminotransferase family. HemL subfamily.</text>
</comment>
<name>GSA_PSEA6</name>
<protein>
    <recommendedName>
        <fullName evidence="1">Glutamate-1-semialdehyde 2,1-aminomutase</fullName>
        <shortName evidence="1">GSA</shortName>
        <ecNumber evidence="1">5.4.3.8</ecNumber>
    </recommendedName>
    <alternativeName>
        <fullName evidence="1">Glutamate-1-semialdehyde aminotransferase</fullName>
        <shortName evidence="1">GSA-AT</shortName>
    </alternativeName>
</protein>
<dbReference type="EC" id="5.4.3.8" evidence="1"/>
<dbReference type="EMBL" id="CP000388">
    <property type="protein sequence ID" value="ABG39025.1"/>
    <property type="molecule type" value="Genomic_DNA"/>
</dbReference>
<dbReference type="RefSeq" id="WP_011573409.1">
    <property type="nucleotide sequence ID" value="NC_008228.1"/>
</dbReference>
<dbReference type="SMR" id="Q15YL3"/>
<dbReference type="STRING" id="342610.Patl_0495"/>
<dbReference type="KEGG" id="pat:Patl_0495"/>
<dbReference type="eggNOG" id="COG0001">
    <property type="taxonomic scope" value="Bacteria"/>
</dbReference>
<dbReference type="HOGENOM" id="CLU_016922_1_5_6"/>
<dbReference type="OrthoDB" id="9801052at2"/>
<dbReference type="UniPathway" id="UPA00251">
    <property type="reaction ID" value="UER00317"/>
</dbReference>
<dbReference type="Proteomes" id="UP000001981">
    <property type="component" value="Chromosome"/>
</dbReference>
<dbReference type="GO" id="GO:0005737">
    <property type="term" value="C:cytoplasm"/>
    <property type="evidence" value="ECO:0007669"/>
    <property type="project" value="UniProtKB-SubCell"/>
</dbReference>
<dbReference type="GO" id="GO:0042286">
    <property type="term" value="F:glutamate-1-semialdehyde 2,1-aminomutase activity"/>
    <property type="evidence" value="ECO:0007669"/>
    <property type="project" value="UniProtKB-UniRule"/>
</dbReference>
<dbReference type="GO" id="GO:0030170">
    <property type="term" value="F:pyridoxal phosphate binding"/>
    <property type="evidence" value="ECO:0007669"/>
    <property type="project" value="InterPro"/>
</dbReference>
<dbReference type="GO" id="GO:0008483">
    <property type="term" value="F:transaminase activity"/>
    <property type="evidence" value="ECO:0007669"/>
    <property type="project" value="InterPro"/>
</dbReference>
<dbReference type="GO" id="GO:0006782">
    <property type="term" value="P:protoporphyrinogen IX biosynthetic process"/>
    <property type="evidence" value="ECO:0007669"/>
    <property type="project" value="UniProtKB-UniRule"/>
</dbReference>
<dbReference type="CDD" id="cd00610">
    <property type="entry name" value="OAT_like"/>
    <property type="match status" value="1"/>
</dbReference>
<dbReference type="FunFam" id="3.40.640.10:FF:000021">
    <property type="entry name" value="Glutamate-1-semialdehyde 2,1-aminomutase"/>
    <property type="match status" value="1"/>
</dbReference>
<dbReference type="Gene3D" id="3.90.1150.10">
    <property type="entry name" value="Aspartate Aminotransferase, domain 1"/>
    <property type="match status" value="1"/>
</dbReference>
<dbReference type="Gene3D" id="3.40.640.10">
    <property type="entry name" value="Type I PLP-dependent aspartate aminotransferase-like (Major domain)"/>
    <property type="match status" value="1"/>
</dbReference>
<dbReference type="HAMAP" id="MF_00375">
    <property type="entry name" value="HemL_aminotrans_3"/>
    <property type="match status" value="1"/>
</dbReference>
<dbReference type="InterPro" id="IPR004639">
    <property type="entry name" value="4pyrrol_synth_GluAld_NH2Trfase"/>
</dbReference>
<dbReference type="InterPro" id="IPR005814">
    <property type="entry name" value="Aminotrans_3"/>
</dbReference>
<dbReference type="InterPro" id="IPR049704">
    <property type="entry name" value="Aminotrans_3_PPA_site"/>
</dbReference>
<dbReference type="InterPro" id="IPR015424">
    <property type="entry name" value="PyrdxlP-dep_Trfase"/>
</dbReference>
<dbReference type="InterPro" id="IPR015421">
    <property type="entry name" value="PyrdxlP-dep_Trfase_major"/>
</dbReference>
<dbReference type="InterPro" id="IPR015422">
    <property type="entry name" value="PyrdxlP-dep_Trfase_small"/>
</dbReference>
<dbReference type="NCBIfam" id="TIGR00713">
    <property type="entry name" value="hemL"/>
    <property type="match status" value="1"/>
</dbReference>
<dbReference type="NCBIfam" id="NF000818">
    <property type="entry name" value="PRK00062.1"/>
    <property type="match status" value="1"/>
</dbReference>
<dbReference type="PANTHER" id="PTHR43713">
    <property type="entry name" value="GLUTAMATE-1-SEMIALDEHYDE 2,1-AMINOMUTASE"/>
    <property type="match status" value="1"/>
</dbReference>
<dbReference type="PANTHER" id="PTHR43713:SF3">
    <property type="entry name" value="GLUTAMATE-1-SEMIALDEHYDE 2,1-AMINOMUTASE 1, CHLOROPLASTIC-RELATED"/>
    <property type="match status" value="1"/>
</dbReference>
<dbReference type="Pfam" id="PF00202">
    <property type="entry name" value="Aminotran_3"/>
    <property type="match status" value="1"/>
</dbReference>
<dbReference type="SUPFAM" id="SSF53383">
    <property type="entry name" value="PLP-dependent transferases"/>
    <property type="match status" value="1"/>
</dbReference>
<dbReference type="PROSITE" id="PS00600">
    <property type="entry name" value="AA_TRANSFER_CLASS_3"/>
    <property type="match status" value="1"/>
</dbReference>
<gene>
    <name evidence="1" type="primary">hemL</name>
    <name type="ordered locus">Patl_0495</name>
</gene>
<sequence>MQKSEQLFARAQKHIPGGVNSPVRAFRAVGGTPPFIEKADGPYLYDADGKQYIDYVQSWGPMVLGHNNPIIRQAVIDAAQNGLSFGAPTEAEVTIADLVSELVPSMEMLRMVNSGTEATMSAIRLARGYTKRDKILKFEGCYHGHADALLVKAGSGALTFGVPSSPGIPADFAKHTLTMEYNNIDSVVQAFEQYPDDIACIIVEPVAGNMNCIPPVHGFLQGLRDVCDKYGAVLIFDEVMTGFRVALGGAQAKYNIVPDLTCLGKVIGGGMPVGAFGGKRDIMQHIAPSGPVYQAGTLSGNPVAMAAGLAALNQVKRPGLYEELSEATKTLAEGIKAIANGLGIPMSVNYAGSMFGLFFTDVECVTNYQQAINCNTEQFNHFYHGMLENGVYLAPASYEAGFVSAQHSPEIIQQTLQIAEKVLADVAKKFG</sequence>